<dbReference type="EMBL" id="AL590842">
    <property type="protein sequence ID" value="CAL22670.1"/>
    <property type="molecule type" value="Genomic_DNA"/>
</dbReference>
<dbReference type="EMBL" id="AE009952">
    <property type="protein sequence ID" value="AAM87658.1"/>
    <property type="molecule type" value="Genomic_DNA"/>
</dbReference>
<dbReference type="EMBL" id="AE017042">
    <property type="protein sequence ID" value="AAS64148.1"/>
    <property type="molecule type" value="Genomic_DNA"/>
</dbReference>
<dbReference type="PIR" id="AB0498">
    <property type="entry name" value="AB0498"/>
</dbReference>
<dbReference type="RefSeq" id="WP_002220739.1">
    <property type="nucleotide sequence ID" value="NZ_WUCM01000028.1"/>
</dbReference>
<dbReference type="RefSeq" id="YP_002348953.1">
    <property type="nucleotide sequence ID" value="NC_003143.1"/>
</dbReference>
<dbReference type="SMR" id="Q8Z9U3"/>
<dbReference type="IntAct" id="Q8Z9U3">
    <property type="interactions" value="1"/>
</dbReference>
<dbReference type="STRING" id="214092.YPO4102"/>
<dbReference type="PaxDb" id="214092-YPO4102"/>
<dbReference type="DNASU" id="1149063"/>
<dbReference type="EnsemblBacteria" id="AAS64148">
    <property type="protein sequence ID" value="AAS64148"/>
    <property type="gene ID" value="YP_4009"/>
</dbReference>
<dbReference type="GeneID" id="57974622"/>
<dbReference type="KEGG" id="ype:YPO4102"/>
<dbReference type="KEGG" id="ypk:y4117"/>
<dbReference type="KEGG" id="ypm:YP_4009"/>
<dbReference type="PATRIC" id="fig|214092.21.peg.4644"/>
<dbReference type="eggNOG" id="COG0706">
    <property type="taxonomic scope" value="Bacteria"/>
</dbReference>
<dbReference type="HOGENOM" id="CLU_016535_3_0_6"/>
<dbReference type="OMA" id="YAEFGWV"/>
<dbReference type="OrthoDB" id="9780552at2"/>
<dbReference type="Proteomes" id="UP000000815">
    <property type="component" value="Chromosome"/>
</dbReference>
<dbReference type="Proteomes" id="UP000001019">
    <property type="component" value="Chromosome"/>
</dbReference>
<dbReference type="Proteomes" id="UP000002490">
    <property type="component" value="Chromosome"/>
</dbReference>
<dbReference type="GO" id="GO:0005886">
    <property type="term" value="C:plasma membrane"/>
    <property type="evidence" value="ECO:0000318"/>
    <property type="project" value="GO_Central"/>
</dbReference>
<dbReference type="GO" id="GO:0032977">
    <property type="term" value="F:membrane insertase activity"/>
    <property type="evidence" value="ECO:0000318"/>
    <property type="project" value="GO_Central"/>
</dbReference>
<dbReference type="GO" id="GO:0051205">
    <property type="term" value="P:protein insertion into membrane"/>
    <property type="evidence" value="ECO:0000318"/>
    <property type="project" value="GO_Central"/>
</dbReference>
<dbReference type="GO" id="GO:0015031">
    <property type="term" value="P:protein transport"/>
    <property type="evidence" value="ECO:0007669"/>
    <property type="project" value="UniProtKB-KW"/>
</dbReference>
<dbReference type="CDD" id="cd20070">
    <property type="entry name" value="5TM_YidC_Alb3"/>
    <property type="match status" value="1"/>
</dbReference>
<dbReference type="CDD" id="cd19961">
    <property type="entry name" value="EcYidC-like_peri"/>
    <property type="match status" value="1"/>
</dbReference>
<dbReference type="FunFam" id="2.70.98.90:FF:000001">
    <property type="entry name" value="Membrane protein insertase YidC"/>
    <property type="match status" value="1"/>
</dbReference>
<dbReference type="Gene3D" id="2.70.98.90">
    <property type="match status" value="1"/>
</dbReference>
<dbReference type="HAMAP" id="MF_01810">
    <property type="entry name" value="YidC_type1"/>
    <property type="match status" value="1"/>
</dbReference>
<dbReference type="InterPro" id="IPR019998">
    <property type="entry name" value="Membr_insert_YidC"/>
</dbReference>
<dbReference type="InterPro" id="IPR028053">
    <property type="entry name" value="Membr_insert_YidC_N"/>
</dbReference>
<dbReference type="InterPro" id="IPR001708">
    <property type="entry name" value="YidC/ALB3/OXA1/COX18"/>
</dbReference>
<dbReference type="InterPro" id="IPR028055">
    <property type="entry name" value="YidC/Oxa/ALB_C"/>
</dbReference>
<dbReference type="InterPro" id="IPR047196">
    <property type="entry name" value="YidC_ALB_C"/>
</dbReference>
<dbReference type="InterPro" id="IPR038221">
    <property type="entry name" value="YidC_periplasmic_sf"/>
</dbReference>
<dbReference type="NCBIfam" id="NF002351">
    <property type="entry name" value="PRK01318.1-1"/>
    <property type="match status" value="1"/>
</dbReference>
<dbReference type="NCBIfam" id="NF002352">
    <property type="entry name" value="PRK01318.1-3"/>
    <property type="match status" value="1"/>
</dbReference>
<dbReference type="NCBIfam" id="TIGR03593">
    <property type="entry name" value="yidC_nterm"/>
    <property type="match status" value="1"/>
</dbReference>
<dbReference type="NCBIfam" id="TIGR03592">
    <property type="entry name" value="yidC_oxa1_cterm"/>
    <property type="match status" value="1"/>
</dbReference>
<dbReference type="PANTHER" id="PTHR12428:SF65">
    <property type="entry name" value="CYTOCHROME C OXIDASE ASSEMBLY PROTEIN COX18, MITOCHONDRIAL"/>
    <property type="match status" value="1"/>
</dbReference>
<dbReference type="PANTHER" id="PTHR12428">
    <property type="entry name" value="OXA1"/>
    <property type="match status" value="1"/>
</dbReference>
<dbReference type="Pfam" id="PF02096">
    <property type="entry name" value="60KD_IMP"/>
    <property type="match status" value="1"/>
</dbReference>
<dbReference type="Pfam" id="PF14849">
    <property type="entry name" value="YidC_periplas"/>
    <property type="match status" value="1"/>
</dbReference>
<dbReference type="PRINTS" id="PR00701">
    <property type="entry name" value="60KDINNERMP"/>
</dbReference>
<dbReference type="PRINTS" id="PR01900">
    <property type="entry name" value="YIDCPROTEIN"/>
</dbReference>
<reference key="1">
    <citation type="journal article" date="2001" name="Nature">
        <title>Genome sequence of Yersinia pestis, the causative agent of plague.</title>
        <authorList>
            <person name="Parkhill J."/>
            <person name="Wren B.W."/>
            <person name="Thomson N.R."/>
            <person name="Titball R.W."/>
            <person name="Holden M.T.G."/>
            <person name="Prentice M.B."/>
            <person name="Sebaihia M."/>
            <person name="James K.D."/>
            <person name="Churcher C.M."/>
            <person name="Mungall K.L."/>
            <person name="Baker S."/>
            <person name="Basham D."/>
            <person name="Bentley S.D."/>
            <person name="Brooks K."/>
            <person name="Cerdeno-Tarraga A.-M."/>
            <person name="Chillingworth T."/>
            <person name="Cronin A."/>
            <person name="Davies R.M."/>
            <person name="Davis P."/>
            <person name="Dougan G."/>
            <person name="Feltwell T."/>
            <person name="Hamlin N."/>
            <person name="Holroyd S."/>
            <person name="Jagels K."/>
            <person name="Karlyshev A.V."/>
            <person name="Leather S."/>
            <person name="Moule S."/>
            <person name="Oyston P.C.F."/>
            <person name="Quail M.A."/>
            <person name="Rutherford K.M."/>
            <person name="Simmonds M."/>
            <person name="Skelton J."/>
            <person name="Stevens K."/>
            <person name="Whitehead S."/>
            <person name="Barrell B.G."/>
        </authorList>
    </citation>
    <scope>NUCLEOTIDE SEQUENCE [LARGE SCALE GENOMIC DNA]</scope>
    <source>
        <strain>CO-92 / Biovar Orientalis</strain>
    </source>
</reference>
<reference key="2">
    <citation type="journal article" date="2002" name="J. Bacteriol.">
        <title>Genome sequence of Yersinia pestis KIM.</title>
        <authorList>
            <person name="Deng W."/>
            <person name="Burland V."/>
            <person name="Plunkett G. III"/>
            <person name="Boutin A."/>
            <person name="Mayhew G.F."/>
            <person name="Liss P."/>
            <person name="Perna N.T."/>
            <person name="Rose D.J."/>
            <person name="Mau B."/>
            <person name="Zhou S."/>
            <person name="Schwartz D.C."/>
            <person name="Fetherston J.D."/>
            <person name="Lindler L.E."/>
            <person name="Brubaker R.R."/>
            <person name="Plano G.V."/>
            <person name="Straley S.C."/>
            <person name="McDonough K.A."/>
            <person name="Nilles M.L."/>
            <person name="Matson J.S."/>
            <person name="Blattner F.R."/>
            <person name="Perry R.D."/>
        </authorList>
    </citation>
    <scope>NUCLEOTIDE SEQUENCE [LARGE SCALE GENOMIC DNA]</scope>
    <source>
        <strain>KIM10+ / Biovar Mediaevalis</strain>
    </source>
</reference>
<reference key="3">
    <citation type="journal article" date="2004" name="DNA Res.">
        <title>Complete genome sequence of Yersinia pestis strain 91001, an isolate avirulent to humans.</title>
        <authorList>
            <person name="Song Y."/>
            <person name="Tong Z."/>
            <person name="Wang J."/>
            <person name="Wang L."/>
            <person name="Guo Z."/>
            <person name="Han Y."/>
            <person name="Zhang J."/>
            <person name="Pei D."/>
            <person name="Zhou D."/>
            <person name="Qin H."/>
            <person name="Pang X."/>
            <person name="Han Y."/>
            <person name="Zhai J."/>
            <person name="Li M."/>
            <person name="Cui B."/>
            <person name="Qi Z."/>
            <person name="Jin L."/>
            <person name="Dai R."/>
            <person name="Chen F."/>
            <person name="Li S."/>
            <person name="Ye C."/>
            <person name="Du Z."/>
            <person name="Lin W."/>
            <person name="Wang J."/>
            <person name="Yu J."/>
            <person name="Yang H."/>
            <person name="Wang J."/>
            <person name="Huang P."/>
            <person name="Yang R."/>
        </authorList>
    </citation>
    <scope>NUCLEOTIDE SEQUENCE [LARGE SCALE GENOMIC DNA]</scope>
    <source>
        <strain>91001 / Biovar Mediaevalis</strain>
    </source>
</reference>
<name>YIDC_YERPE</name>
<protein>
    <recommendedName>
        <fullName evidence="1">Membrane protein insertase YidC</fullName>
    </recommendedName>
    <alternativeName>
        <fullName evidence="1">Foldase YidC</fullName>
    </alternativeName>
    <alternativeName>
        <fullName evidence="1">Membrane integrase YidC</fullName>
    </alternativeName>
    <alternativeName>
        <fullName evidence="1">Membrane protein YidC</fullName>
    </alternativeName>
</protein>
<accession>Q8Z9U3</accession>
<accession>Q0W9T5</accession>
<evidence type="ECO:0000255" key="1">
    <source>
        <dbReference type="HAMAP-Rule" id="MF_01810"/>
    </source>
</evidence>
<evidence type="ECO:0000256" key="2">
    <source>
        <dbReference type="SAM" id="MobiDB-lite"/>
    </source>
</evidence>
<proteinExistence type="inferred from homology"/>
<feature type="chain" id="PRO_0000124775" description="Membrane protein insertase YidC">
    <location>
        <begin position="1"/>
        <end position="546"/>
    </location>
</feature>
<feature type="transmembrane region" description="Helical" evidence="1">
    <location>
        <begin position="6"/>
        <end position="26"/>
    </location>
</feature>
<feature type="transmembrane region" description="Helical" evidence="1">
    <location>
        <begin position="344"/>
        <end position="364"/>
    </location>
</feature>
<feature type="transmembrane region" description="Helical" evidence="1">
    <location>
        <begin position="419"/>
        <end position="439"/>
    </location>
</feature>
<feature type="transmembrane region" description="Helical" evidence="1">
    <location>
        <begin position="457"/>
        <end position="477"/>
    </location>
</feature>
<feature type="transmembrane region" description="Helical" evidence="1">
    <location>
        <begin position="498"/>
        <end position="518"/>
    </location>
</feature>
<feature type="region of interest" description="Disordered" evidence="2">
    <location>
        <begin position="30"/>
        <end position="55"/>
    </location>
</feature>
<feature type="compositionally biased region" description="Low complexity" evidence="2">
    <location>
        <begin position="30"/>
        <end position="44"/>
    </location>
</feature>
<keyword id="KW-0997">Cell inner membrane</keyword>
<keyword id="KW-1003">Cell membrane</keyword>
<keyword id="KW-0143">Chaperone</keyword>
<keyword id="KW-0472">Membrane</keyword>
<keyword id="KW-0653">Protein transport</keyword>
<keyword id="KW-1185">Reference proteome</keyword>
<keyword id="KW-0812">Transmembrane</keyword>
<keyword id="KW-1133">Transmembrane helix</keyword>
<keyword id="KW-0813">Transport</keyword>
<sequence>MDSQRNLLLIALLFVSFMIWQAWQVDNNPQPTAQTTQQTTNTATGDKASQAVPGSGQGQLITVKTDVLSLTINTRGGDIEQANLLAYPDTLGSSNTFELLETTPSFVYQAQSGLTGKNGPDNPANGDRPLFEVPQTSFVLADGQDELRIPLTFTSKDGSVFIKTFVLKRNDYAIGVDYHVNNASAAPLELTLFGQLKQSINLPKKRDTGSNNFALQTYRGAAYSSDETKYKKYSFSDIEDKNLDITTKGGWVAMLQQYFATAWIPAANETNTFYSAELGNGLAAIGFKGAPVVIQPGEQKQLSATLWVGPEIQNKMAEIAPHLDLTVDYGWLWFISQPLFKLLKFIHSFVGNWGFSIIVITFIVRGIMYPLTKAQYTSMAKMRLLQPKLAAMRERIGDDKQRMSQEMMALYKAEKVNPLGGCLPLIIQMPIFLALYYMLMSSVELRHAPFILWIHDLSAQDPYYILPILMGITMYFIQKMSPTTVTDPMQQKIMTFMPVIFTVFFLWFPAGLVLYYIVSNLVTILQQQLIYRGLEKRGLHSREKKK</sequence>
<gene>
    <name evidence="1" type="primary">yidC</name>
    <name type="ordered locus">YPO4102</name>
    <name type="ordered locus">y4117</name>
    <name type="ordered locus">YP_4009</name>
</gene>
<comment type="function">
    <text evidence="1">Required for the insertion and/or proper folding and/or complex formation of integral membrane proteins into the membrane. Involved in integration of membrane proteins that insert both dependently and independently of the Sec translocase complex, as well as at least some lipoproteins. Aids folding of multispanning membrane proteins.</text>
</comment>
<comment type="subunit">
    <text evidence="1">Interacts with the Sec translocase complex via SecD. Specifically interacts with transmembrane segments of nascent integral membrane proteins during membrane integration.</text>
</comment>
<comment type="subcellular location">
    <subcellularLocation>
        <location evidence="1">Cell inner membrane</location>
        <topology evidence="1">Multi-pass membrane protein</topology>
    </subcellularLocation>
</comment>
<comment type="similarity">
    <text evidence="1">Belongs to the OXA1/ALB3/YidC family. Type 1 subfamily.</text>
</comment>
<organism>
    <name type="scientific">Yersinia pestis</name>
    <dbReference type="NCBI Taxonomy" id="632"/>
    <lineage>
        <taxon>Bacteria</taxon>
        <taxon>Pseudomonadati</taxon>
        <taxon>Pseudomonadota</taxon>
        <taxon>Gammaproteobacteria</taxon>
        <taxon>Enterobacterales</taxon>
        <taxon>Yersiniaceae</taxon>
        <taxon>Yersinia</taxon>
    </lineage>
</organism>